<reference key="1">
    <citation type="journal article" date="2010" name="Genome Biol. Evol.">
        <title>Continuing evolution of Burkholderia mallei through genome reduction and large-scale rearrangements.</title>
        <authorList>
            <person name="Losada L."/>
            <person name="Ronning C.M."/>
            <person name="DeShazer D."/>
            <person name="Woods D."/>
            <person name="Fedorova N."/>
            <person name="Kim H.S."/>
            <person name="Shabalina S.A."/>
            <person name="Pearson T.R."/>
            <person name="Brinkac L."/>
            <person name="Tan P."/>
            <person name="Nandi T."/>
            <person name="Crabtree J."/>
            <person name="Badger J."/>
            <person name="Beckstrom-Sternberg S."/>
            <person name="Saqib M."/>
            <person name="Schutzer S.E."/>
            <person name="Keim P."/>
            <person name="Nierman W.C."/>
        </authorList>
    </citation>
    <scope>NUCLEOTIDE SEQUENCE [LARGE SCALE GENOMIC DNA]</scope>
    <source>
        <strain>SAVP1</strain>
    </source>
</reference>
<proteinExistence type="inferred from homology"/>
<feature type="chain" id="PRO_0000335128" description="DNA mismatch repair protein MutS">
    <location>
        <begin position="1"/>
        <end position="891"/>
    </location>
</feature>
<feature type="binding site" evidence="1">
    <location>
        <begin position="634"/>
        <end position="641"/>
    </location>
    <ligand>
        <name>ATP</name>
        <dbReference type="ChEBI" id="CHEBI:30616"/>
    </ligand>
</feature>
<accession>A1V5I2</accession>
<protein>
    <recommendedName>
        <fullName evidence="1">DNA mismatch repair protein MutS</fullName>
    </recommendedName>
</protein>
<gene>
    <name evidence="1" type="primary">mutS</name>
    <name type="ordered locus">BMASAVP1_A2173</name>
</gene>
<comment type="function">
    <text evidence="1">This protein is involved in the repair of mismatches in DNA. It is possible that it carries out the mismatch recognition step. This protein has a weak ATPase activity.</text>
</comment>
<comment type="similarity">
    <text evidence="1">Belongs to the DNA mismatch repair MutS family.</text>
</comment>
<comment type="sequence caution" evidence="2">
    <conflict type="erroneous initiation">
        <sequence resource="EMBL-CDS" id="ABM50370"/>
    </conflict>
</comment>
<organism>
    <name type="scientific">Burkholderia mallei (strain SAVP1)</name>
    <dbReference type="NCBI Taxonomy" id="320388"/>
    <lineage>
        <taxon>Bacteria</taxon>
        <taxon>Pseudomonadati</taxon>
        <taxon>Pseudomonadota</taxon>
        <taxon>Betaproteobacteria</taxon>
        <taxon>Burkholderiales</taxon>
        <taxon>Burkholderiaceae</taxon>
        <taxon>Burkholderia</taxon>
        <taxon>pseudomallei group</taxon>
    </lineage>
</organism>
<name>MUTS_BURMS</name>
<sequence>MATQIDASSEAAAATAAAQHTPMMQQYLRIKSEHPDTLVFYRMGDFYELFFEDAEKAARLLDLTLTQRGASAGTPIKMAGVPHHAVEQYLAKLVKFGESAAICEQIGDPATSKGPVERKVVRVVTPGTLTDAALLSDKSDVFLLALCVGHNKRGVASNIGLAWLNLASGALRLAELAPDQLGAALERIRPAEILAADGTIESVPAGMGAITRVPAWHFDIASGTQRLCDQLEVASLDGFGAQALTSANGAAGALLIYAAATQGQQLRHVRSLKVENESEYIGLDPSTRRNLELTETLRGTESPTLYSLLDTCCTAMGSRLLRHWLHHPPRASVAAQARHQAIGALLDAPPNAGLDSLRSALRQIADVERITGRLALLSARPRDLSSLRDTFAALPALRERVAEIASNAAALGRLEAALEPPPGCLDLLTRAIAAEPAAMVRDGGVIARGYDAELDELRDISENCGQFLIDLETRERARTGISNLRVEYNKVHGFYIEVTRGQTDKVPDDYRRRQTLKNAERYITPELKTFEDKALSAQERALARERALYDGVLQALLPHIEGCQRVASGLAELDLLAAFAERARTLDWVAPEFTDEIGIEIDQGRHPVVEAQVEQFIANDCALNPERKLLLITGPNMGGKSTFMRQTALIALMAYVGSYVPAKAARFGPIDRIFTRIGAADDLAGGRSTFMVEMTEAAAILNDATPHSLVLMDEIGRGTSTFDGLALAWAIARHLLSHNRCYTLFATHYFELTQLPAEFPQAANVHLSAVEHGHGIVFLHAVEEGPANQSYGLQVAQLAGVPAPVIRAARKHLAHLEQQSAAQATPQLDLFAAPPVVDEPECNEPPAAATPHPALERLLELDPDDLKPRDALDLLYELHTLARSGPADAQR</sequence>
<dbReference type="EMBL" id="CP000526">
    <property type="protein sequence ID" value="ABM50370.1"/>
    <property type="status" value="ALT_INIT"/>
    <property type="molecule type" value="Genomic_DNA"/>
</dbReference>
<dbReference type="SMR" id="A1V5I2"/>
<dbReference type="KEGG" id="bmv:BMASAVP1_A2173"/>
<dbReference type="HOGENOM" id="CLU_002472_4_1_4"/>
<dbReference type="GO" id="GO:0005829">
    <property type="term" value="C:cytosol"/>
    <property type="evidence" value="ECO:0007669"/>
    <property type="project" value="TreeGrafter"/>
</dbReference>
<dbReference type="GO" id="GO:0005524">
    <property type="term" value="F:ATP binding"/>
    <property type="evidence" value="ECO:0007669"/>
    <property type="project" value="UniProtKB-UniRule"/>
</dbReference>
<dbReference type="GO" id="GO:0140664">
    <property type="term" value="F:ATP-dependent DNA damage sensor activity"/>
    <property type="evidence" value="ECO:0007669"/>
    <property type="project" value="InterPro"/>
</dbReference>
<dbReference type="GO" id="GO:0003684">
    <property type="term" value="F:damaged DNA binding"/>
    <property type="evidence" value="ECO:0007669"/>
    <property type="project" value="UniProtKB-UniRule"/>
</dbReference>
<dbReference type="GO" id="GO:0030983">
    <property type="term" value="F:mismatched DNA binding"/>
    <property type="evidence" value="ECO:0007669"/>
    <property type="project" value="InterPro"/>
</dbReference>
<dbReference type="GO" id="GO:0006298">
    <property type="term" value="P:mismatch repair"/>
    <property type="evidence" value="ECO:0007669"/>
    <property type="project" value="UniProtKB-UniRule"/>
</dbReference>
<dbReference type="CDD" id="cd03284">
    <property type="entry name" value="ABC_MutS1"/>
    <property type="match status" value="1"/>
</dbReference>
<dbReference type="FunFam" id="3.40.1170.10:FF:000001">
    <property type="entry name" value="DNA mismatch repair protein MutS"/>
    <property type="match status" value="1"/>
</dbReference>
<dbReference type="FunFam" id="3.40.50.300:FF:000870">
    <property type="entry name" value="MutS protein homolog 4"/>
    <property type="match status" value="1"/>
</dbReference>
<dbReference type="Gene3D" id="1.10.1420.10">
    <property type="match status" value="2"/>
</dbReference>
<dbReference type="Gene3D" id="6.10.140.430">
    <property type="match status" value="1"/>
</dbReference>
<dbReference type="Gene3D" id="3.40.1170.10">
    <property type="entry name" value="DNA repair protein MutS, domain I"/>
    <property type="match status" value="1"/>
</dbReference>
<dbReference type="Gene3D" id="3.30.420.110">
    <property type="entry name" value="MutS, connector domain"/>
    <property type="match status" value="1"/>
</dbReference>
<dbReference type="Gene3D" id="3.40.50.300">
    <property type="entry name" value="P-loop containing nucleotide triphosphate hydrolases"/>
    <property type="match status" value="1"/>
</dbReference>
<dbReference type="HAMAP" id="MF_00096">
    <property type="entry name" value="MutS"/>
    <property type="match status" value="1"/>
</dbReference>
<dbReference type="InterPro" id="IPR005748">
    <property type="entry name" value="DNA_mismatch_repair_MutS"/>
</dbReference>
<dbReference type="InterPro" id="IPR007695">
    <property type="entry name" value="DNA_mismatch_repair_MutS-lik_N"/>
</dbReference>
<dbReference type="InterPro" id="IPR017261">
    <property type="entry name" value="DNA_mismatch_repair_MutS/MSH"/>
</dbReference>
<dbReference type="InterPro" id="IPR000432">
    <property type="entry name" value="DNA_mismatch_repair_MutS_C"/>
</dbReference>
<dbReference type="InterPro" id="IPR007861">
    <property type="entry name" value="DNA_mismatch_repair_MutS_clamp"/>
</dbReference>
<dbReference type="InterPro" id="IPR007696">
    <property type="entry name" value="DNA_mismatch_repair_MutS_core"/>
</dbReference>
<dbReference type="InterPro" id="IPR016151">
    <property type="entry name" value="DNA_mismatch_repair_MutS_N"/>
</dbReference>
<dbReference type="InterPro" id="IPR036187">
    <property type="entry name" value="DNA_mismatch_repair_MutS_sf"/>
</dbReference>
<dbReference type="InterPro" id="IPR007860">
    <property type="entry name" value="DNA_mmatch_repair_MutS_con_dom"/>
</dbReference>
<dbReference type="InterPro" id="IPR045076">
    <property type="entry name" value="MutS"/>
</dbReference>
<dbReference type="InterPro" id="IPR036678">
    <property type="entry name" value="MutS_con_dom_sf"/>
</dbReference>
<dbReference type="InterPro" id="IPR027417">
    <property type="entry name" value="P-loop_NTPase"/>
</dbReference>
<dbReference type="NCBIfam" id="TIGR01070">
    <property type="entry name" value="mutS1"/>
    <property type="match status" value="1"/>
</dbReference>
<dbReference type="NCBIfam" id="NF003810">
    <property type="entry name" value="PRK05399.1"/>
    <property type="match status" value="1"/>
</dbReference>
<dbReference type="PANTHER" id="PTHR11361:SF34">
    <property type="entry name" value="DNA MISMATCH REPAIR PROTEIN MSH1, MITOCHONDRIAL"/>
    <property type="match status" value="1"/>
</dbReference>
<dbReference type="PANTHER" id="PTHR11361">
    <property type="entry name" value="DNA MISMATCH REPAIR PROTEIN MUTS FAMILY MEMBER"/>
    <property type="match status" value="1"/>
</dbReference>
<dbReference type="Pfam" id="PF01624">
    <property type="entry name" value="MutS_I"/>
    <property type="match status" value="1"/>
</dbReference>
<dbReference type="Pfam" id="PF05188">
    <property type="entry name" value="MutS_II"/>
    <property type="match status" value="1"/>
</dbReference>
<dbReference type="Pfam" id="PF05192">
    <property type="entry name" value="MutS_III"/>
    <property type="match status" value="1"/>
</dbReference>
<dbReference type="Pfam" id="PF05190">
    <property type="entry name" value="MutS_IV"/>
    <property type="match status" value="1"/>
</dbReference>
<dbReference type="Pfam" id="PF00488">
    <property type="entry name" value="MutS_V"/>
    <property type="match status" value="1"/>
</dbReference>
<dbReference type="PIRSF" id="PIRSF037677">
    <property type="entry name" value="DNA_mis_repair_Msh6"/>
    <property type="match status" value="1"/>
</dbReference>
<dbReference type="SMART" id="SM00534">
    <property type="entry name" value="MUTSac"/>
    <property type="match status" value="1"/>
</dbReference>
<dbReference type="SMART" id="SM00533">
    <property type="entry name" value="MUTSd"/>
    <property type="match status" value="1"/>
</dbReference>
<dbReference type="SUPFAM" id="SSF55271">
    <property type="entry name" value="DNA repair protein MutS, domain I"/>
    <property type="match status" value="1"/>
</dbReference>
<dbReference type="SUPFAM" id="SSF53150">
    <property type="entry name" value="DNA repair protein MutS, domain II"/>
    <property type="match status" value="1"/>
</dbReference>
<dbReference type="SUPFAM" id="SSF48334">
    <property type="entry name" value="DNA repair protein MutS, domain III"/>
    <property type="match status" value="1"/>
</dbReference>
<dbReference type="SUPFAM" id="SSF52540">
    <property type="entry name" value="P-loop containing nucleoside triphosphate hydrolases"/>
    <property type="match status" value="1"/>
</dbReference>
<dbReference type="PROSITE" id="PS00486">
    <property type="entry name" value="DNA_MISMATCH_REPAIR_2"/>
    <property type="match status" value="1"/>
</dbReference>
<evidence type="ECO:0000255" key="1">
    <source>
        <dbReference type="HAMAP-Rule" id="MF_00096"/>
    </source>
</evidence>
<evidence type="ECO:0000305" key="2"/>
<keyword id="KW-0067">ATP-binding</keyword>
<keyword id="KW-0227">DNA damage</keyword>
<keyword id="KW-0234">DNA repair</keyword>
<keyword id="KW-0238">DNA-binding</keyword>
<keyword id="KW-0547">Nucleotide-binding</keyword>